<gene>
    <name evidence="1" type="primary">mutS</name>
    <name type="ordered locus">A1G_02290</name>
</gene>
<dbReference type="EMBL" id="CP000848">
    <property type="protein sequence ID" value="ABV76011.1"/>
    <property type="molecule type" value="Genomic_DNA"/>
</dbReference>
<dbReference type="RefSeq" id="WP_012150610.1">
    <property type="nucleotide sequence ID" value="NZ_CP121767.1"/>
</dbReference>
<dbReference type="SMR" id="A8GRI6"/>
<dbReference type="GeneID" id="79937173"/>
<dbReference type="KEGG" id="rri:A1G_02290"/>
<dbReference type="HOGENOM" id="CLU_002472_3_1_5"/>
<dbReference type="Proteomes" id="UP000006832">
    <property type="component" value="Chromosome"/>
</dbReference>
<dbReference type="GO" id="GO:0005524">
    <property type="term" value="F:ATP binding"/>
    <property type="evidence" value="ECO:0007669"/>
    <property type="project" value="UniProtKB-UniRule"/>
</dbReference>
<dbReference type="GO" id="GO:0140664">
    <property type="term" value="F:ATP-dependent DNA damage sensor activity"/>
    <property type="evidence" value="ECO:0007669"/>
    <property type="project" value="InterPro"/>
</dbReference>
<dbReference type="GO" id="GO:0003684">
    <property type="term" value="F:damaged DNA binding"/>
    <property type="evidence" value="ECO:0007669"/>
    <property type="project" value="UniProtKB-UniRule"/>
</dbReference>
<dbReference type="GO" id="GO:0030983">
    <property type="term" value="F:mismatched DNA binding"/>
    <property type="evidence" value="ECO:0007669"/>
    <property type="project" value="InterPro"/>
</dbReference>
<dbReference type="GO" id="GO:0006298">
    <property type="term" value="P:mismatch repair"/>
    <property type="evidence" value="ECO:0007669"/>
    <property type="project" value="UniProtKB-UniRule"/>
</dbReference>
<dbReference type="CDD" id="cd03284">
    <property type="entry name" value="ABC_MutS1"/>
    <property type="match status" value="1"/>
</dbReference>
<dbReference type="FunFam" id="3.40.50.300:FF:001238">
    <property type="entry name" value="DNA mismatch repair protein"/>
    <property type="match status" value="1"/>
</dbReference>
<dbReference type="FunFam" id="3.40.1170.10:FF:000001">
    <property type="entry name" value="DNA mismatch repair protein MutS"/>
    <property type="match status" value="1"/>
</dbReference>
<dbReference type="Gene3D" id="1.10.1420.10">
    <property type="match status" value="2"/>
</dbReference>
<dbReference type="Gene3D" id="6.10.140.430">
    <property type="match status" value="1"/>
</dbReference>
<dbReference type="Gene3D" id="3.40.1170.10">
    <property type="entry name" value="DNA repair protein MutS, domain I"/>
    <property type="match status" value="1"/>
</dbReference>
<dbReference type="Gene3D" id="3.30.420.110">
    <property type="entry name" value="MutS, connector domain"/>
    <property type="match status" value="1"/>
</dbReference>
<dbReference type="Gene3D" id="3.40.50.300">
    <property type="entry name" value="P-loop containing nucleotide triphosphate hydrolases"/>
    <property type="match status" value="1"/>
</dbReference>
<dbReference type="HAMAP" id="MF_00096">
    <property type="entry name" value="MutS"/>
    <property type="match status" value="1"/>
</dbReference>
<dbReference type="InterPro" id="IPR005748">
    <property type="entry name" value="DNA_mismatch_repair_MutS"/>
</dbReference>
<dbReference type="InterPro" id="IPR007695">
    <property type="entry name" value="DNA_mismatch_repair_MutS-lik_N"/>
</dbReference>
<dbReference type="InterPro" id="IPR017261">
    <property type="entry name" value="DNA_mismatch_repair_MutS/MSH"/>
</dbReference>
<dbReference type="InterPro" id="IPR000432">
    <property type="entry name" value="DNA_mismatch_repair_MutS_C"/>
</dbReference>
<dbReference type="InterPro" id="IPR007861">
    <property type="entry name" value="DNA_mismatch_repair_MutS_clamp"/>
</dbReference>
<dbReference type="InterPro" id="IPR007696">
    <property type="entry name" value="DNA_mismatch_repair_MutS_core"/>
</dbReference>
<dbReference type="InterPro" id="IPR016151">
    <property type="entry name" value="DNA_mismatch_repair_MutS_N"/>
</dbReference>
<dbReference type="InterPro" id="IPR036187">
    <property type="entry name" value="DNA_mismatch_repair_MutS_sf"/>
</dbReference>
<dbReference type="InterPro" id="IPR007860">
    <property type="entry name" value="DNA_mmatch_repair_MutS_con_dom"/>
</dbReference>
<dbReference type="InterPro" id="IPR045076">
    <property type="entry name" value="MutS"/>
</dbReference>
<dbReference type="InterPro" id="IPR036678">
    <property type="entry name" value="MutS_con_dom_sf"/>
</dbReference>
<dbReference type="InterPro" id="IPR027417">
    <property type="entry name" value="P-loop_NTPase"/>
</dbReference>
<dbReference type="NCBIfam" id="TIGR01070">
    <property type="entry name" value="mutS1"/>
    <property type="match status" value="1"/>
</dbReference>
<dbReference type="NCBIfam" id="NF003810">
    <property type="entry name" value="PRK05399.1"/>
    <property type="match status" value="1"/>
</dbReference>
<dbReference type="PANTHER" id="PTHR11361:SF34">
    <property type="entry name" value="DNA MISMATCH REPAIR PROTEIN MSH1, MITOCHONDRIAL"/>
    <property type="match status" value="1"/>
</dbReference>
<dbReference type="PANTHER" id="PTHR11361">
    <property type="entry name" value="DNA MISMATCH REPAIR PROTEIN MUTS FAMILY MEMBER"/>
    <property type="match status" value="1"/>
</dbReference>
<dbReference type="Pfam" id="PF01624">
    <property type="entry name" value="MutS_I"/>
    <property type="match status" value="1"/>
</dbReference>
<dbReference type="Pfam" id="PF05188">
    <property type="entry name" value="MutS_II"/>
    <property type="match status" value="1"/>
</dbReference>
<dbReference type="Pfam" id="PF05192">
    <property type="entry name" value="MutS_III"/>
    <property type="match status" value="1"/>
</dbReference>
<dbReference type="Pfam" id="PF05190">
    <property type="entry name" value="MutS_IV"/>
    <property type="match status" value="1"/>
</dbReference>
<dbReference type="Pfam" id="PF00488">
    <property type="entry name" value="MutS_V"/>
    <property type="match status" value="1"/>
</dbReference>
<dbReference type="PIRSF" id="PIRSF037677">
    <property type="entry name" value="DNA_mis_repair_Msh6"/>
    <property type="match status" value="1"/>
</dbReference>
<dbReference type="SMART" id="SM00534">
    <property type="entry name" value="MUTSac"/>
    <property type="match status" value="1"/>
</dbReference>
<dbReference type="SMART" id="SM00533">
    <property type="entry name" value="MUTSd"/>
    <property type="match status" value="1"/>
</dbReference>
<dbReference type="SUPFAM" id="SSF55271">
    <property type="entry name" value="DNA repair protein MutS, domain I"/>
    <property type="match status" value="1"/>
</dbReference>
<dbReference type="SUPFAM" id="SSF53150">
    <property type="entry name" value="DNA repair protein MutS, domain II"/>
    <property type="match status" value="1"/>
</dbReference>
<dbReference type="SUPFAM" id="SSF48334">
    <property type="entry name" value="DNA repair protein MutS, domain III"/>
    <property type="match status" value="1"/>
</dbReference>
<dbReference type="SUPFAM" id="SSF52540">
    <property type="entry name" value="P-loop containing nucleoside triphosphate hydrolases"/>
    <property type="match status" value="1"/>
</dbReference>
<dbReference type="PROSITE" id="PS00486">
    <property type="entry name" value="DNA_MISMATCH_REPAIR_2"/>
    <property type="match status" value="1"/>
</dbReference>
<organism>
    <name type="scientific">Rickettsia rickettsii (strain Sheila Smith)</name>
    <dbReference type="NCBI Taxonomy" id="392021"/>
    <lineage>
        <taxon>Bacteria</taxon>
        <taxon>Pseudomonadati</taxon>
        <taxon>Pseudomonadota</taxon>
        <taxon>Alphaproteobacteria</taxon>
        <taxon>Rickettsiales</taxon>
        <taxon>Rickettsiaceae</taxon>
        <taxon>Rickettsieae</taxon>
        <taxon>Rickettsia</taxon>
        <taxon>spotted fever group</taxon>
    </lineage>
</organism>
<accession>A8GRI6</accession>
<proteinExistence type="inferred from homology"/>
<keyword id="KW-0067">ATP-binding</keyword>
<keyword id="KW-0227">DNA damage</keyword>
<keyword id="KW-0234">DNA repair</keyword>
<keyword id="KW-0238">DNA-binding</keyword>
<keyword id="KW-0547">Nucleotide-binding</keyword>
<feature type="chain" id="PRO_1000008088" description="DNA mismatch repair protein MutS">
    <location>
        <begin position="1"/>
        <end position="886"/>
    </location>
</feature>
<feature type="binding site" evidence="1">
    <location>
        <begin position="641"/>
        <end position="648"/>
    </location>
    <ligand>
        <name>ATP</name>
        <dbReference type="ChEBI" id="CHEBI:30616"/>
    </ligand>
</feature>
<comment type="function">
    <text evidence="1">This protein is involved in the repair of mismatches in DNA. It is possible that it carries out the mismatch recognition step. This protein has a weak ATPase activity.</text>
</comment>
<comment type="similarity">
    <text evidence="1">Belongs to the DNA mismatch repair MutS family.</text>
</comment>
<name>MUTS_RICRS</name>
<sequence>MNLQELKQKYNYDVATKMMQQYLDIKFAHLDCLLLFRMGDFYEMFYEDAILASNVLGIALTKRGKNGEEEIAMCGVPYHALENYLTKLIEENYKVAICDQLETPEEAKNRGGYKAVVTRDVTRIITPGTIIEENLIASAEPNYLASLVIPKNKETASLCYVDLSTSEIVVVNVPETEILNELARLKPREILLSENLRSSNLADSIFKQLNFRITYQVDSFFAINKCKKIILDFYKMKDIKGIGEISSSQICAIGSVLEYLSLTQKQNIPHLPIPRIINFHSYMTIDFSTRRNLEIVTNSQGDSQGSLLSTLNHTVTKQGGRLLYNFLSSPLTNIAKINHRLNITEFFYSNLEIVKKIRELLKKTSDIERCLTRITMNRSSGRDLLSIKYTLETATIIKEVFFDAYGFNLPDFIEKIIKPLSGDAELYNLIDETIREDAPNNLNDGGIIKHEYHPKVAQLHDLINNGKLYIEKLKDQYRKETGIDSLKISHNNVIGLFIDITAKNVNKILDPKFIHRQTTVNHVRYTTAELQKLESELVNAKTLVISLEKELYADICSQVIEKASYLRMLASSLSGLDVFCNFAYIADEYDYVKPEFTDDLSFDIVKGRHPVVEKALQRESKSFVYNDCHLSELERIWLITGPNMAGKSTFLRQNAIIAIIAQIGSFVPAKSAKIGVVDKIFSRIGAADDLIKGQSTFMAEMLETSAILAQSTKNSLIILDEVGRGTSTYDGVSIAWSVLEYIHDKLKCRCLFATHYHELTVMSNFLPALQNYTIAIEESGKDILFLHNIISGAADRSYGLHVAALAGLPESVINRAEQILLKFEKTSTGKGKNILSTESNNLSLFYLEPNKTTISSKLDKKFSTIDPDKLSPKEALELIYELKKLV</sequence>
<protein>
    <recommendedName>
        <fullName evidence="1">DNA mismatch repair protein MutS</fullName>
    </recommendedName>
</protein>
<evidence type="ECO:0000255" key="1">
    <source>
        <dbReference type="HAMAP-Rule" id="MF_00096"/>
    </source>
</evidence>
<reference key="1">
    <citation type="submission" date="2007-09" db="EMBL/GenBank/DDBJ databases">
        <title>Complete genome sequence of Rickettsia rickettsii.</title>
        <authorList>
            <person name="Madan A."/>
            <person name="Fahey J."/>
            <person name="Helton E."/>
            <person name="Ketteman M."/>
            <person name="Madan A."/>
            <person name="Rodrigues S."/>
            <person name="Sanchez A."/>
            <person name="Dasch G."/>
            <person name="Eremeeva M."/>
        </authorList>
    </citation>
    <scope>NUCLEOTIDE SEQUENCE [LARGE SCALE GENOMIC DNA]</scope>
    <source>
        <strain>Sheila Smith</strain>
    </source>
</reference>